<organism>
    <name type="scientific">Burkholderia cenocepacia (strain ATCC BAA-245 / DSM 16553 / LMG 16656 / NCTC 13227 / J2315 / CF5610)</name>
    <name type="common">Burkholderia cepacia (strain J2315)</name>
    <dbReference type="NCBI Taxonomy" id="216591"/>
    <lineage>
        <taxon>Bacteria</taxon>
        <taxon>Pseudomonadati</taxon>
        <taxon>Pseudomonadota</taxon>
        <taxon>Betaproteobacteria</taxon>
        <taxon>Burkholderiales</taxon>
        <taxon>Burkholderiaceae</taxon>
        <taxon>Burkholderia</taxon>
        <taxon>Burkholderia cepacia complex</taxon>
    </lineage>
</organism>
<sequence length="539" mass="59377">MHDKILILDFGSQVTQLIARRVREAHVYCEIHPNDVSDDFVREFAPKAVILSGSHASTYEDHQLRAPQAVWDLGVPVLGICYGMQTMAVQLGGKVEWSDHREFGYAEMRAHGHTRLLDDIEDFTTAEGHGMLKVWMSHGDKVAELPPGFALMASTPSCPIAGMADEARGYYAVQFHPEVTHTVKGRQIIERFVLQIAGAKPDWIMKNHIEEAVAKIREQVGDEEVILGLSGGVDSSVAAALIHRAIGDQLTCVFVDHGLLRLNEGKMVLDMFEGRLHAKVVHVDASDQFLGHLAGVTDPEAKRKIIGREFVEVFQAEAKKLSKAKWLAQGTIYPDVVESGGTKTKKATTIKSHHNVGGLPETLGLKLLEPLRDLFKDEVRELGVALGLPPEMVYRHPFPGPGLGVRILGEVKREYADLLRRADAIFIEELRGTTATAQDAAAGLCGEADVGKSWYDLTSQAFAVFLPVKSVGVMGDGRTYDYVTSLRAVQTTDFMTAHWAHLPYALLGRASNRIINEVRGINRVVYDISGKPPATIEWE</sequence>
<gene>
    <name evidence="1" type="primary">guaA</name>
    <name type="ordered locus">BceJ2315_20240</name>
    <name type="ORF">BCAL2061</name>
</gene>
<protein>
    <recommendedName>
        <fullName evidence="1">GMP synthase [glutamine-hydrolyzing]</fullName>
        <ecNumber evidence="1">6.3.5.2</ecNumber>
    </recommendedName>
    <alternativeName>
        <fullName evidence="1">GMP synthetase</fullName>
    </alternativeName>
    <alternativeName>
        <fullName evidence="1">Glutamine amidotransferase</fullName>
    </alternativeName>
</protein>
<feature type="chain" id="PRO_1000120233" description="GMP synthase [glutamine-hydrolyzing]">
    <location>
        <begin position="1"/>
        <end position="539"/>
    </location>
</feature>
<feature type="domain" description="Glutamine amidotransferase type-1" evidence="1">
    <location>
        <begin position="4"/>
        <end position="202"/>
    </location>
</feature>
<feature type="domain" description="GMPS ATP-PPase" evidence="1">
    <location>
        <begin position="203"/>
        <end position="395"/>
    </location>
</feature>
<feature type="active site" description="Nucleophile" evidence="1">
    <location>
        <position position="81"/>
    </location>
</feature>
<feature type="active site" evidence="1">
    <location>
        <position position="176"/>
    </location>
</feature>
<feature type="active site" evidence="1">
    <location>
        <position position="178"/>
    </location>
</feature>
<feature type="binding site" evidence="1">
    <location>
        <begin position="230"/>
        <end position="236"/>
    </location>
    <ligand>
        <name>ATP</name>
        <dbReference type="ChEBI" id="CHEBI:30616"/>
    </ligand>
</feature>
<keyword id="KW-0067">ATP-binding</keyword>
<keyword id="KW-0315">Glutamine amidotransferase</keyword>
<keyword id="KW-0332">GMP biosynthesis</keyword>
<keyword id="KW-0436">Ligase</keyword>
<keyword id="KW-0547">Nucleotide-binding</keyword>
<keyword id="KW-0658">Purine biosynthesis</keyword>
<evidence type="ECO:0000255" key="1">
    <source>
        <dbReference type="HAMAP-Rule" id="MF_00344"/>
    </source>
</evidence>
<comment type="function">
    <text evidence="1">Catalyzes the synthesis of GMP from XMP.</text>
</comment>
<comment type="catalytic activity">
    <reaction evidence="1">
        <text>XMP + L-glutamine + ATP + H2O = GMP + L-glutamate + AMP + diphosphate + 2 H(+)</text>
        <dbReference type="Rhea" id="RHEA:11680"/>
        <dbReference type="ChEBI" id="CHEBI:15377"/>
        <dbReference type="ChEBI" id="CHEBI:15378"/>
        <dbReference type="ChEBI" id="CHEBI:29985"/>
        <dbReference type="ChEBI" id="CHEBI:30616"/>
        <dbReference type="ChEBI" id="CHEBI:33019"/>
        <dbReference type="ChEBI" id="CHEBI:57464"/>
        <dbReference type="ChEBI" id="CHEBI:58115"/>
        <dbReference type="ChEBI" id="CHEBI:58359"/>
        <dbReference type="ChEBI" id="CHEBI:456215"/>
        <dbReference type="EC" id="6.3.5.2"/>
    </reaction>
</comment>
<comment type="pathway">
    <text evidence="1">Purine metabolism; GMP biosynthesis; GMP from XMP (L-Gln route): step 1/1.</text>
</comment>
<comment type="subunit">
    <text evidence="1">Homodimer.</text>
</comment>
<accession>B4EC68</accession>
<name>GUAA_BURCJ</name>
<proteinExistence type="inferred from homology"/>
<dbReference type="EC" id="6.3.5.2" evidence="1"/>
<dbReference type="EMBL" id="AM747720">
    <property type="protein sequence ID" value="CAR52361.1"/>
    <property type="molecule type" value="Genomic_DNA"/>
</dbReference>
<dbReference type="RefSeq" id="WP_006484787.1">
    <property type="nucleotide sequence ID" value="NC_011000.1"/>
</dbReference>
<dbReference type="SMR" id="B4EC68"/>
<dbReference type="MEROPS" id="C26.957"/>
<dbReference type="KEGG" id="bcj:BCAL2061"/>
<dbReference type="eggNOG" id="COG0518">
    <property type="taxonomic scope" value="Bacteria"/>
</dbReference>
<dbReference type="eggNOG" id="COG0519">
    <property type="taxonomic scope" value="Bacteria"/>
</dbReference>
<dbReference type="HOGENOM" id="CLU_014340_0_5_4"/>
<dbReference type="BioCyc" id="BCEN216591:G1G1V-2260-MONOMER"/>
<dbReference type="UniPathway" id="UPA00189">
    <property type="reaction ID" value="UER00296"/>
</dbReference>
<dbReference type="Proteomes" id="UP000001035">
    <property type="component" value="Chromosome 1"/>
</dbReference>
<dbReference type="GO" id="GO:0005829">
    <property type="term" value="C:cytosol"/>
    <property type="evidence" value="ECO:0007669"/>
    <property type="project" value="TreeGrafter"/>
</dbReference>
<dbReference type="GO" id="GO:0005524">
    <property type="term" value="F:ATP binding"/>
    <property type="evidence" value="ECO:0007669"/>
    <property type="project" value="UniProtKB-UniRule"/>
</dbReference>
<dbReference type="GO" id="GO:0003921">
    <property type="term" value="F:GMP synthase activity"/>
    <property type="evidence" value="ECO:0007669"/>
    <property type="project" value="InterPro"/>
</dbReference>
<dbReference type="CDD" id="cd01742">
    <property type="entry name" value="GATase1_GMP_Synthase"/>
    <property type="match status" value="1"/>
</dbReference>
<dbReference type="CDD" id="cd01997">
    <property type="entry name" value="GMP_synthase_C"/>
    <property type="match status" value="1"/>
</dbReference>
<dbReference type="FunFam" id="3.30.300.10:FF:000002">
    <property type="entry name" value="GMP synthase [glutamine-hydrolyzing]"/>
    <property type="match status" value="1"/>
</dbReference>
<dbReference type="FunFam" id="3.40.50.620:FF:000001">
    <property type="entry name" value="GMP synthase [glutamine-hydrolyzing]"/>
    <property type="match status" value="1"/>
</dbReference>
<dbReference type="FunFam" id="3.40.50.880:FF:000001">
    <property type="entry name" value="GMP synthase [glutamine-hydrolyzing]"/>
    <property type="match status" value="1"/>
</dbReference>
<dbReference type="Gene3D" id="3.30.300.10">
    <property type="match status" value="1"/>
</dbReference>
<dbReference type="Gene3D" id="3.40.50.880">
    <property type="match status" value="1"/>
</dbReference>
<dbReference type="Gene3D" id="3.40.50.620">
    <property type="entry name" value="HUPs"/>
    <property type="match status" value="1"/>
</dbReference>
<dbReference type="HAMAP" id="MF_00344">
    <property type="entry name" value="GMP_synthase"/>
    <property type="match status" value="1"/>
</dbReference>
<dbReference type="InterPro" id="IPR029062">
    <property type="entry name" value="Class_I_gatase-like"/>
</dbReference>
<dbReference type="InterPro" id="IPR017926">
    <property type="entry name" value="GATASE"/>
</dbReference>
<dbReference type="InterPro" id="IPR001674">
    <property type="entry name" value="GMP_synth_C"/>
</dbReference>
<dbReference type="InterPro" id="IPR004739">
    <property type="entry name" value="GMP_synth_GATase"/>
</dbReference>
<dbReference type="InterPro" id="IPR022955">
    <property type="entry name" value="GMP_synthase"/>
</dbReference>
<dbReference type="InterPro" id="IPR025777">
    <property type="entry name" value="GMPS_ATP_PPase_dom"/>
</dbReference>
<dbReference type="InterPro" id="IPR022310">
    <property type="entry name" value="NAD/GMP_synthase"/>
</dbReference>
<dbReference type="InterPro" id="IPR014729">
    <property type="entry name" value="Rossmann-like_a/b/a_fold"/>
</dbReference>
<dbReference type="NCBIfam" id="TIGR00884">
    <property type="entry name" value="guaA_Cterm"/>
    <property type="match status" value="1"/>
</dbReference>
<dbReference type="NCBIfam" id="TIGR00888">
    <property type="entry name" value="guaA_Nterm"/>
    <property type="match status" value="1"/>
</dbReference>
<dbReference type="NCBIfam" id="NF000848">
    <property type="entry name" value="PRK00074.1"/>
    <property type="match status" value="1"/>
</dbReference>
<dbReference type="PANTHER" id="PTHR11922:SF2">
    <property type="entry name" value="GMP SYNTHASE [GLUTAMINE-HYDROLYZING]"/>
    <property type="match status" value="1"/>
</dbReference>
<dbReference type="PANTHER" id="PTHR11922">
    <property type="entry name" value="GMP SYNTHASE-RELATED"/>
    <property type="match status" value="1"/>
</dbReference>
<dbReference type="Pfam" id="PF00117">
    <property type="entry name" value="GATase"/>
    <property type="match status" value="1"/>
</dbReference>
<dbReference type="Pfam" id="PF00958">
    <property type="entry name" value="GMP_synt_C"/>
    <property type="match status" value="1"/>
</dbReference>
<dbReference type="Pfam" id="PF02540">
    <property type="entry name" value="NAD_synthase"/>
    <property type="match status" value="1"/>
</dbReference>
<dbReference type="SUPFAM" id="SSF52402">
    <property type="entry name" value="Adenine nucleotide alpha hydrolases-like"/>
    <property type="match status" value="1"/>
</dbReference>
<dbReference type="SUPFAM" id="SSF52317">
    <property type="entry name" value="Class I glutamine amidotransferase-like"/>
    <property type="match status" value="1"/>
</dbReference>
<dbReference type="SUPFAM" id="SSF54810">
    <property type="entry name" value="GMP synthetase C-terminal dimerisation domain"/>
    <property type="match status" value="1"/>
</dbReference>
<dbReference type="PROSITE" id="PS51273">
    <property type="entry name" value="GATASE_TYPE_1"/>
    <property type="match status" value="1"/>
</dbReference>
<dbReference type="PROSITE" id="PS51553">
    <property type="entry name" value="GMPS_ATP_PPASE"/>
    <property type="match status" value="1"/>
</dbReference>
<reference key="1">
    <citation type="journal article" date="2009" name="J. Bacteriol.">
        <title>The genome of Burkholderia cenocepacia J2315, an epidemic pathogen of cystic fibrosis patients.</title>
        <authorList>
            <person name="Holden M.T."/>
            <person name="Seth-Smith H.M."/>
            <person name="Crossman L.C."/>
            <person name="Sebaihia M."/>
            <person name="Bentley S.D."/>
            <person name="Cerdeno-Tarraga A.M."/>
            <person name="Thomson N.R."/>
            <person name="Bason N."/>
            <person name="Quail M.A."/>
            <person name="Sharp S."/>
            <person name="Cherevach I."/>
            <person name="Churcher C."/>
            <person name="Goodhead I."/>
            <person name="Hauser H."/>
            <person name="Holroyd N."/>
            <person name="Mungall K."/>
            <person name="Scott P."/>
            <person name="Walker D."/>
            <person name="White B."/>
            <person name="Rose H."/>
            <person name="Iversen P."/>
            <person name="Mil-Homens D."/>
            <person name="Rocha E.P."/>
            <person name="Fialho A.M."/>
            <person name="Baldwin A."/>
            <person name="Dowson C."/>
            <person name="Barrell B.G."/>
            <person name="Govan J.R."/>
            <person name="Vandamme P."/>
            <person name="Hart C.A."/>
            <person name="Mahenthiralingam E."/>
            <person name="Parkhill J."/>
        </authorList>
    </citation>
    <scope>NUCLEOTIDE SEQUENCE [LARGE SCALE GENOMIC DNA]</scope>
    <source>
        <strain>ATCC BAA-245 / DSM 16553 / LMG 16656 / NCTC 13227 / J2315 / CF5610</strain>
    </source>
</reference>